<evidence type="ECO:0000255" key="1">
    <source>
        <dbReference type="HAMAP-Rule" id="MF_00661"/>
    </source>
</evidence>
<evidence type="ECO:0000256" key="2">
    <source>
        <dbReference type="SAM" id="MobiDB-lite"/>
    </source>
</evidence>
<reference key="1">
    <citation type="journal article" date="2008" name="J. Biotechnol.">
        <title>The genome of Xanthomonas campestris pv. campestris B100 and its use for the reconstruction of metabolic pathways involved in xanthan biosynthesis.</title>
        <authorList>
            <person name="Vorhoelter F.-J."/>
            <person name="Schneiker S."/>
            <person name="Goesmann A."/>
            <person name="Krause L."/>
            <person name="Bekel T."/>
            <person name="Kaiser O."/>
            <person name="Linke B."/>
            <person name="Patschkowski T."/>
            <person name="Rueckert C."/>
            <person name="Schmid J."/>
            <person name="Sidhu V.K."/>
            <person name="Sieber V."/>
            <person name="Tauch A."/>
            <person name="Watt S.A."/>
            <person name="Weisshaar B."/>
            <person name="Becker A."/>
            <person name="Niehaus K."/>
            <person name="Puehler A."/>
        </authorList>
    </citation>
    <scope>NUCLEOTIDE SEQUENCE [LARGE SCALE GENOMIC DNA]</scope>
    <source>
        <strain>B100</strain>
    </source>
</reference>
<comment type="function">
    <text evidence="1">DEAD-box RNA helicase involved in RNA degradation. Has RNA-dependent ATPase activity and unwinds double-stranded RNA.</text>
</comment>
<comment type="catalytic activity">
    <reaction evidence="1">
        <text>ATP + H2O = ADP + phosphate + H(+)</text>
        <dbReference type="Rhea" id="RHEA:13065"/>
        <dbReference type="ChEBI" id="CHEBI:15377"/>
        <dbReference type="ChEBI" id="CHEBI:15378"/>
        <dbReference type="ChEBI" id="CHEBI:30616"/>
        <dbReference type="ChEBI" id="CHEBI:43474"/>
        <dbReference type="ChEBI" id="CHEBI:456216"/>
        <dbReference type="EC" id="3.6.4.13"/>
    </reaction>
</comment>
<comment type="subunit">
    <text evidence="1">Component of the RNA degradosome, which is a multiprotein complex involved in RNA processing and mRNA degradation.</text>
</comment>
<comment type="subcellular location">
    <subcellularLocation>
        <location evidence="1">Cytoplasm</location>
    </subcellularLocation>
</comment>
<comment type="similarity">
    <text evidence="1">Belongs to the DEAD box helicase family. RhlB subfamily.</text>
</comment>
<feature type="chain" id="PRO_1000131313" description="ATP-dependent RNA helicase RhlB">
    <location>
        <begin position="1"/>
        <end position="573"/>
    </location>
</feature>
<feature type="domain" description="Helicase ATP-binding" evidence="1">
    <location>
        <begin position="40"/>
        <end position="220"/>
    </location>
</feature>
<feature type="domain" description="Helicase C-terminal" evidence="1">
    <location>
        <begin position="231"/>
        <end position="393"/>
    </location>
</feature>
<feature type="region of interest" description="Disordered" evidence="2">
    <location>
        <begin position="391"/>
        <end position="559"/>
    </location>
</feature>
<feature type="short sequence motif" description="Q motif">
    <location>
        <begin position="9"/>
        <end position="37"/>
    </location>
</feature>
<feature type="short sequence motif" description="DEAD box">
    <location>
        <begin position="166"/>
        <end position="169"/>
    </location>
</feature>
<feature type="compositionally biased region" description="Low complexity" evidence="2">
    <location>
        <begin position="391"/>
        <end position="400"/>
    </location>
</feature>
<feature type="compositionally biased region" description="Acidic residues" evidence="2">
    <location>
        <begin position="402"/>
        <end position="411"/>
    </location>
</feature>
<feature type="compositionally biased region" description="Basic and acidic residues" evidence="2">
    <location>
        <begin position="419"/>
        <end position="432"/>
    </location>
</feature>
<feature type="compositionally biased region" description="Gly residues" evidence="2">
    <location>
        <begin position="435"/>
        <end position="449"/>
    </location>
</feature>
<feature type="compositionally biased region" description="Basic and acidic residues" evidence="2">
    <location>
        <begin position="450"/>
        <end position="461"/>
    </location>
</feature>
<feature type="compositionally biased region" description="Low complexity" evidence="2">
    <location>
        <begin position="476"/>
        <end position="499"/>
    </location>
</feature>
<feature type="compositionally biased region" description="Basic residues" evidence="2">
    <location>
        <begin position="505"/>
        <end position="514"/>
    </location>
</feature>
<feature type="compositionally biased region" description="Low complexity" evidence="2">
    <location>
        <begin position="516"/>
        <end position="528"/>
    </location>
</feature>
<feature type="compositionally biased region" description="Low complexity" evidence="2">
    <location>
        <begin position="541"/>
        <end position="559"/>
    </location>
</feature>
<feature type="binding site" evidence="1">
    <location>
        <begin position="53"/>
        <end position="60"/>
    </location>
    <ligand>
        <name>ATP</name>
        <dbReference type="ChEBI" id="CHEBI:30616"/>
    </ligand>
</feature>
<name>RHLB_XANCB</name>
<keyword id="KW-0067">ATP-binding</keyword>
<keyword id="KW-0963">Cytoplasm</keyword>
<keyword id="KW-0347">Helicase</keyword>
<keyword id="KW-0378">Hydrolase</keyword>
<keyword id="KW-0547">Nucleotide-binding</keyword>
<keyword id="KW-0694">RNA-binding</keyword>
<sequence length="573" mass="62317">MSDKPLTDLTFSSFDLHPALVAGLESAGFTRCTPIQALTLPVALPGGDVAGQAQTGTGKTLAFLVAVMNRLLIRPALADRKPEDPRALILAPTRELAIQIHKDAVKFGADLGLRFALVYGGVDYDKQRELLQQGVDVIIATPGRLIDYVKQHKVVSLHACEICVLDEADRMFDLGFIKDIRFLLRRMPERGTRQTLLFSATLSHRVLELAYEHMNEPEKLVVETETITAARVRQRIYFPSDEEKQTLLLGLLSRSEGARTMVFVNTKAFVERVARTLERHGYRVGVLSGDVPQKKRESLLNRFQKGQLEILVATDVAARGLHIDGVKYVYNYDLPFDAEDYVHRIGRTARLGEEGDAISFACERYAMSLPDIEAYIEQKIPVEPVTTELLTPLPRTPRATVEGEEVDDDAGDSVGTIFREAREQRAADEARRGGGRSGPGGASRSGSGGGRRDGAGADGKPRPPRRKPRVEGEADPAAAPSETPVVVAAAAETPAVTAAEGERAPRKRRRRRNGRPVEGAEPVVASTPVPAPAAPRKPTQVVAKPVRAAAKPSGSPSLLSRIGRRLRSLVSGS</sequence>
<dbReference type="EC" id="3.6.4.13" evidence="1"/>
<dbReference type="EMBL" id="AM920689">
    <property type="protein sequence ID" value="CAP53325.1"/>
    <property type="molecule type" value="Genomic_DNA"/>
</dbReference>
<dbReference type="SMR" id="B0RWT6"/>
<dbReference type="KEGG" id="xca:xcc-b100_3958"/>
<dbReference type="HOGENOM" id="CLU_003041_28_4_6"/>
<dbReference type="Proteomes" id="UP000001188">
    <property type="component" value="Chromosome"/>
</dbReference>
<dbReference type="GO" id="GO:0005829">
    <property type="term" value="C:cytosol"/>
    <property type="evidence" value="ECO:0007669"/>
    <property type="project" value="TreeGrafter"/>
</dbReference>
<dbReference type="GO" id="GO:0005524">
    <property type="term" value="F:ATP binding"/>
    <property type="evidence" value="ECO:0007669"/>
    <property type="project" value="UniProtKB-UniRule"/>
</dbReference>
<dbReference type="GO" id="GO:0016887">
    <property type="term" value="F:ATP hydrolysis activity"/>
    <property type="evidence" value="ECO:0007669"/>
    <property type="project" value="RHEA"/>
</dbReference>
<dbReference type="GO" id="GO:0003723">
    <property type="term" value="F:RNA binding"/>
    <property type="evidence" value="ECO:0007669"/>
    <property type="project" value="UniProtKB-UniRule"/>
</dbReference>
<dbReference type="GO" id="GO:0003724">
    <property type="term" value="F:RNA helicase activity"/>
    <property type="evidence" value="ECO:0007669"/>
    <property type="project" value="UniProtKB-UniRule"/>
</dbReference>
<dbReference type="GO" id="GO:0006401">
    <property type="term" value="P:RNA catabolic process"/>
    <property type="evidence" value="ECO:0007669"/>
    <property type="project" value="UniProtKB-UniRule"/>
</dbReference>
<dbReference type="CDD" id="cd00268">
    <property type="entry name" value="DEADc"/>
    <property type="match status" value="1"/>
</dbReference>
<dbReference type="CDD" id="cd18787">
    <property type="entry name" value="SF2_C_DEAD"/>
    <property type="match status" value="1"/>
</dbReference>
<dbReference type="Gene3D" id="3.40.50.300">
    <property type="entry name" value="P-loop containing nucleotide triphosphate hydrolases"/>
    <property type="match status" value="2"/>
</dbReference>
<dbReference type="HAMAP" id="MF_00661">
    <property type="entry name" value="DEAD_helicase_RhlB"/>
    <property type="match status" value="1"/>
</dbReference>
<dbReference type="InterPro" id="IPR011545">
    <property type="entry name" value="DEAD/DEAH_box_helicase_dom"/>
</dbReference>
<dbReference type="InterPro" id="IPR050079">
    <property type="entry name" value="DEAD_box_RNA_helicase"/>
</dbReference>
<dbReference type="InterPro" id="IPR014001">
    <property type="entry name" value="Helicase_ATP-bd"/>
</dbReference>
<dbReference type="InterPro" id="IPR001650">
    <property type="entry name" value="Helicase_C-like"/>
</dbReference>
<dbReference type="InterPro" id="IPR027417">
    <property type="entry name" value="P-loop_NTPase"/>
</dbReference>
<dbReference type="InterPro" id="IPR022077">
    <property type="entry name" value="RhlB"/>
</dbReference>
<dbReference type="InterPro" id="IPR000629">
    <property type="entry name" value="RNA-helicase_DEAD-box_CS"/>
</dbReference>
<dbReference type="InterPro" id="IPR023554">
    <property type="entry name" value="RNA_helicase_ATP-dep_RhlB"/>
</dbReference>
<dbReference type="InterPro" id="IPR014014">
    <property type="entry name" value="RNA_helicase_DEAD_Q_motif"/>
</dbReference>
<dbReference type="NCBIfam" id="NF003390">
    <property type="entry name" value="PRK04537.1"/>
    <property type="match status" value="1"/>
</dbReference>
<dbReference type="PANTHER" id="PTHR47959:SF10">
    <property type="entry name" value="ATP-DEPENDENT RNA HELICASE RHLB"/>
    <property type="match status" value="1"/>
</dbReference>
<dbReference type="PANTHER" id="PTHR47959">
    <property type="entry name" value="ATP-DEPENDENT RNA HELICASE RHLE-RELATED"/>
    <property type="match status" value="1"/>
</dbReference>
<dbReference type="Pfam" id="PF00270">
    <property type="entry name" value="DEAD"/>
    <property type="match status" value="1"/>
</dbReference>
<dbReference type="Pfam" id="PF00271">
    <property type="entry name" value="Helicase_C"/>
    <property type="match status" value="1"/>
</dbReference>
<dbReference type="Pfam" id="PF12300">
    <property type="entry name" value="RhlB"/>
    <property type="match status" value="1"/>
</dbReference>
<dbReference type="SMART" id="SM00487">
    <property type="entry name" value="DEXDc"/>
    <property type="match status" value="1"/>
</dbReference>
<dbReference type="SMART" id="SM00490">
    <property type="entry name" value="HELICc"/>
    <property type="match status" value="1"/>
</dbReference>
<dbReference type="SUPFAM" id="SSF52540">
    <property type="entry name" value="P-loop containing nucleoside triphosphate hydrolases"/>
    <property type="match status" value="1"/>
</dbReference>
<dbReference type="PROSITE" id="PS00039">
    <property type="entry name" value="DEAD_ATP_HELICASE"/>
    <property type="match status" value="1"/>
</dbReference>
<dbReference type="PROSITE" id="PS51192">
    <property type="entry name" value="HELICASE_ATP_BIND_1"/>
    <property type="match status" value="1"/>
</dbReference>
<dbReference type="PROSITE" id="PS51194">
    <property type="entry name" value="HELICASE_CTER"/>
    <property type="match status" value="1"/>
</dbReference>
<dbReference type="PROSITE" id="PS51195">
    <property type="entry name" value="Q_MOTIF"/>
    <property type="match status" value="1"/>
</dbReference>
<organism>
    <name type="scientific">Xanthomonas campestris pv. campestris (strain B100)</name>
    <dbReference type="NCBI Taxonomy" id="509169"/>
    <lineage>
        <taxon>Bacteria</taxon>
        <taxon>Pseudomonadati</taxon>
        <taxon>Pseudomonadota</taxon>
        <taxon>Gammaproteobacteria</taxon>
        <taxon>Lysobacterales</taxon>
        <taxon>Lysobacteraceae</taxon>
        <taxon>Xanthomonas</taxon>
    </lineage>
</organism>
<protein>
    <recommendedName>
        <fullName evidence="1">ATP-dependent RNA helicase RhlB</fullName>
        <ecNumber evidence="1">3.6.4.13</ecNumber>
    </recommendedName>
</protein>
<gene>
    <name evidence="1" type="primary">rhlB</name>
    <name type="ordered locus">xcc-b100_3958</name>
</gene>
<accession>B0RWT6</accession>
<proteinExistence type="inferred from homology"/>